<keyword id="KW-0131">Cell cycle</keyword>
<keyword id="KW-0132">Cell division</keyword>
<keyword id="KW-0159">Chromosome partition</keyword>
<keyword id="KW-0963">Cytoplasm</keyword>
<comment type="function">
    <text evidence="1">Participates in chromosomal partition during cell division. May act via the formation of a condensin-like complex containing Smc and ScpB that pull DNA away from mid-cell into both cell halves.</text>
</comment>
<comment type="subunit">
    <text evidence="1">Component of a cohesin-like complex composed of ScpA, ScpB and the Smc homodimer, in which ScpA and ScpB bind to the head domain of Smc. The presence of the three proteins is required for the association of the complex with DNA.</text>
</comment>
<comment type="subcellular location">
    <subcellularLocation>
        <location evidence="1">Cytoplasm</location>
    </subcellularLocation>
    <text evidence="1">Associated with two foci at the outer edges of the nucleoid region in young cells, and at four foci within both cell halves in older cells.</text>
</comment>
<comment type="similarity">
    <text evidence="1">Belongs to the ScpA family.</text>
</comment>
<name>SCPA_DESHD</name>
<proteinExistence type="inferred from homology"/>
<protein>
    <recommendedName>
        <fullName evidence="1">Segregation and condensation protein A</fullName>
    </recommendedName>
</protein>
<reference key="1">
    <citation type="journal article" date="2012" name="BMC Microbiol.">
        <title>Genome sequence of Desulfitobacterium hafniense DCB-2, a Gram-positive anaerobe capable of dehalogenation and metal reduction.</title>
        <authorList>
            <person name="Kim S.H."/>
            <person name="Harzman C."/>
            <person name="Davis J.K."/>
            <person name="Hutcheson R."/>
            <person name="Broderick J.B."/>
            <person name="Marsh T.L."/>
            <person name="Tiedje J.M."/>
        </authorList>
    </citation>
    <scope>NUCLEOTIDE SEQUENCE [LARGE SCALE GENOMIC DNA]</scope>
    <source>
        <strain>DSM 10664 / DCB-2</strain>
    </source>
</reference>
<accession>B8FPL1</accession>
<organism>
    <name type="scientific">Desulfitobacterium hafniense (strain DSM 10664 / DCB-2)</name>
    <dbReference type="NCBI Taxonomy" id="272564"/>
    <lineage>
        <taxon>Bacteria</taxon>
        <taxon>Bacillati</taxon>
        <taxon>Bacillota</taxon>
        <taxon>Clostridia</taxon>
        <taxon>Eubacteriales</taxon>
        <taxon>Desulfitobacteriaceae</taxon>
        <taxon>Desulfitobacterium</taxon>
    </lineage>
</organism>
<feature type="chain" id="PRO_1000187560" description="Segregation and condensation protein A">
    <location>
        <begin position="1"/>
        <end position="261"/>
    </location>
</feature>
<sequence length="261" mass="29930">MSNGSSVSHSANTAPYVELPAFQGPMDLLLHLIQQEKVDIYDIPIARITDQFIQVVRQMEDLDMEVTTEFLVLAAQLLQIKSRYLLPKPVKDVTVEEEGDPRQELVERLLAYRAFKQAAETLGEIQISSGQRYFREVDVDGLRSQFTPADPLAGIHFEALWHAFQRIIERAEQGEEIRTVEPDEIPIEVMVNDVLRRVILHPRGLRFSQLIRGTKRMEIIVSFLALLELLKSGKVHCEQSSQNEEIFVFPTEKAWEFTEGE</sequence>
<evidence type="ECO:0000255" key="1">
    <source>
        <dbReference type="HAMAP-Rule" id="MF_01805"/>
    </source>
</evidence>
<gene>
    <name evidence="1" type="primary">scpA</name>
    <name type="ordered locus">Dhaf_3425</name>
</gene>
<dbReference type="EMBL" id="CP001336">
    <property type="protein sequence ID" value="ACL21443.1"/>
    <property type="molecule type" value="Genomic_DNA"/>
</dbReference>
<dbReference type="RefSeq" id="WP_005811066.1">
    <property type="nucleotide sequence ID" value="NC_011830.1"/>
</dbReference>
<dbReference type="SMR" id="B8FPL1"/>
<dbReference type="KEGG" id="dhd:Dhaf_3425"/>
<dbReference type="HOGENOM" id="CLU_038686_3_0_9"/>
<dbReference type="Proteomes" id="UP000007726">
    <property type="component" value="Chromosome"/>
</dbReference>
<dbReference type="GO" id="GO:0005737">
    <property type="term" value="C:cytoplasm"/>
    <property type="evidence" value="ECO:0007669"/>
    <property type="project" value="UniProtKB-SubCell"/>
</dbReference>
<dbReference type="GO" id="GO:0051301">
    <property type="term" value="P:cell division"/>
    <property type="evidence" value="ECO:0007669"/>
    <property type="project" value="UniProtKB-KW"/>
</dbReference>
<dbReference type="GO" id="GO:0007059">
    <property type="term" value="P:chromosome segregation"/>
    <property type="evidence" value="ECO:0007669"/>
    <property type="project" value="UniProtKB-UniRule"/>
</dbReference>
<dbReference type="GO" id="GO:0006260">
    <property type="term" value="P:DNA replication"/>
    <property type="evidence" value="ECO:0007669"/>
    <property type="project" value="UniProtKB-UniRule"/>
</dbReference>
<dbReference type="Gene3D" id="6.10.250.2410">
    <property type="match status" value="1"/>
</dbReference>
<dbReference type="Gene3D" id="1.10.10.580">
    <property type="entry name" value="Structural maintenance of chromosome 1. Chain E"/>
    <property type="match status" value="1"/>
</dbReference>
<dbReference type="HAMAP" id="MF_01805">
    <property type="entry name" value="ScpA"/>
    <property type="match status" value="1"/>
</dbReference>
<dbReference type="InterPro" id="IPR003768">
    <property type="entry name" value="ScpA"/>
</dbReference>
<dbReference type="InterPro" id="IPR023093">
    <property type="entry name" value="ScpA-like_C"/>
</dbReference>
<dbReference type="PANTHER" id="PTHR33969">
    <property type="entry name" value="SEGREGATION AND CONDENSATION PROTEIN A"/>
    <property type="match status" value="1"/>
</dbReference>
<dbReference type="PANTHER" id="PTHR33969:SF2">
    <property type="entry name" value="SEGREGATION AND CONDENSATION PROTEIN A"/>
    <property type="match status" value="1"/>
</dbReference>
<dbReference type="Pfam" id="PF02616">
    <property type="entry name" value="SMC_ScpA"/>
    <property type="match status" value="1"/>
</dbReference>